<organism>
    <name type="scientific">Bos taurus</name>
    <name type="common">Bovine</name>
    <dbReference type="NCBI Taxonomy" id="9913"/>
    <lineage>
        <taxon>Eukaryota</taxon>
        <taxon>Metazoa</taxon>
        <taxon>Chordata</taxon>
        <taxon>Craniata</taxon>
        <taxon>Vertebrata</taxon>
        <taxon>Euteleostomi</taxon>
        <taxon>Mammalia</taxon>
        <taxon>Eutheria</taxon>
        <taxon>Laurasiatheria</taxon>
        <taxon>Artiodactyla</taxon>
        <taxon>Ruminantia</taxon>
        <taxon>Pecora</taxon>
        <taxon>Bovidae</taxon>
        <taxon>Bovinae</taxon>
        <taxon>Bos</taxon>
    </lineage>
</organism>
<sequence>MGDTAPPQAPTGGLGGAPGAGLLGGGSVTPRVHSAIVERLRARIAVCRQHHLSCEGRYERGRAESSDRERESTLQLLSLVQHGQGARKAGKHTKATASTATATAPPPAPAAPPTASQTAAPAAPAPPPDYHHHHQQHLRSSSSSGGSGGIDGEQQQQPPASTPGDQRNSALIALQGSLKRKQIVNLSPANSKRPNGFVDNSFLDIKRIRVGENLAAGPGGLPVNNGQSQMMSGTLPMSQVPLRKTAALPPPPTHSPGNGLFNMGLKEVKKEPGETLSCSKHVDGQVTQENIFSNRYGDDPGEQLMDPELQELFNELTNISVPPMSDLELENMINATIKQDDPFNIDLGQQSQRSTPRPSLPLEKTVIKSEYSPGLTQGPSGSPQLRPSSAGPAFSMASSGLSASSPIPSVPQSQAQPPPATGAARALPSWQEVSHAQQLKQIAANRQQHVRMHQQQQQHQPTSWPALPSSAGPSPGPFGQEKIPSPSFGQQPFSPQSTPMPGVTGGSNQSKVMANYLFKASPSAQGGPLDVLLQPKPQDLSRSFLNNPHPAMEPRHGSTKPLFHFNSDQANQQMPSVLPSQSKPSLLHYTQQQPQQSSITVQPQQQQQQPQQQQQPQQQQQPQPQQQQQQQPQAQQPAAQPTQPLSNQPLLRAPLPLQQKILLQKIQNQPITGLGYQVSQQHRQDQHSVVGQNAGPSPSPNPCSNPNTGSGYMNSQQSLLNQQLMGKKQTLQRQIMEQKQQLLLQQQMLADAEKIAPQDQINRHLTRPPPDYKDQRRNVGNMQPTAQYSGGSSTVSLNSNQALANPVSTHTILTPNSSLMSTSHGTRMPSLPTAVQNIGIYGNLPCSQPSTYSVTSGMNQLTQPRNPNQLIANQNNPLMPRPPTLGPSNNNNNNVATFGAGSVGNSQQLRPNLTHSMASMPAQRTSNVMITSNTATPNWASQEATAKQQEALKSAGVRFPTGTTTAYAPNQSLQQAVGSQQFSQRAVAPSNQLTPAVQMRPMNQMSQTLNGQNMGPLRSLNLRPNQLSTQLLPTMNQAGTGLSQSRTVSQPPSLAAGGFPSPNQSSRAFQGTDHGNDLAFDFLNQQTDNMGPALNSDADFIDSLLKTEPGNDDWMKDINLDEILGNNS</sequence>
<proteinExistence type="evidence at transcript level"/>
<comment type="function">
    <text evidence="1">Acts as a transcriptional coactivator for NOTCH proteins. Has been shown to amplify NOTCH-induced transcription of HES1. Potentiates activation by NOTCH3 and NOTCH4 more efficiently than MAML1 or MAML3 (By similarity).</text>
</comment>
<comment type="subunit">
    <text evidence="1">Interacts through its N-terminal region with the ankyrin repeat region of the Notch proteins NOTCH1, NOTCH2, NOTCH3 and NOTCH4. Forms a DNA-binding complex with Notch proteins and RBPSUH/RBP-J kappa (By similarity).</text>
</comment>
<comment type="subcellular location">
    <subcellularLocation>
        <location evidence="1">Nucleus speckle</location>
    </subcellularLocation>
    <text evidence="1">Nuclear, in a punctate manner.</text>
</comment>
<comment type="domain">
    <text evidence="1">The C-terminal domain is required for transcriptional activation.</text>
</comment>
<comment type="similarity">
    <text evidence="4">Belongs to the mastermind family.</text>
</comment>
<evidence type="ECO:0000250" key="1"/>
<evidence type="ECO:0000250" key="2">
    <source>
        <dbReference type="UniProtKB" id="Q8IZL2"/>
    </source>
</evidence>
<evidence type="ECO:0000256" key="3">
    <source>
        <dbReference type="SAM" id="MobiDB-lite"/>
    </source>
</evidence>
<evidence type="ECO:0000305" key="4"/>
<dbReference type="EMBL" id="BC140537">
    <property type="protein sequence ID" value="AAI40538.1"/>
    <property type="molecule type" value="mRNA"/>
</dbReference>
<dbReference type="RefSeq" id="NP_001091519.1">
    <property type="nucleotide sequence ID" value="NM_001098050.1"/>
</dbReference>
<dbReference type="SMR" id="A5D7F6"/>
<dbReference type="FunCoup" id="A5D7F6">
    <property type="interactions" value="482"/>
</dbReference>
<dbReference type="STRING" id="9913.ENSBTAP00000051992"/>
<dbReference type="PaxDb" id="9913-ENSBTAP00000051992"/>
<dbReference type="GeneID" id="521194"/>
<dbReference type="KEGG" id="bta:521194"/>
<dbReference type="CTD" id="84441"/>
<dbReference type="eggNOG" id="ENOG502QVWD">
    <property type="taxonomic scope" value="Eukaryota"/>
</dbReference>
<dbReference type="InParanoid" id="A5D7F6"/>
<dbReference type="OrthoDB" id="9908492at2759"/>
<dbReference type="Proteomes" id="UP000009136">
    <property type="component" value="Unplaced"/>
</dbReference>
<dbReference type="GO" id="GO:0016607">
    <property type="term" value="C:nuclear speck"/>
    <property type="evidence" value="ECO:0007669"/>
    <property type="project" value="UniProtKB-SubCell"/>
</dbReference>
<dbReference type="GO" id="GO:0005654">
    <property type="term" value="C:nucleoplasm"/>
    <property type="evidence" value="ECO:0000318"/>
    <property type="project" value="GO_Central"/>
</dbReference>
<dbReference type="GO" id="GO:0003713">
    <property type="term" value="F:transcription coactivator activity"/>
    <property type="evidence" value="ECO:0000318"/>
    <property type="project" value="GO_Central"/>
</dbReference>
<dbReference type="GO" id="GO:0007221">
    <property type="term" value="P:positive regulation of transcription of Notch receptor target"/>
    <property type="evidence" value="ECO:0000318"/>
    <property type="project" value="GO_Central"/>
</dbReference>
<dbReference type="Gene3D" id="6.10.250.970">
    <property type="match status" value="1"/>
</dbReference>
<dbReference type="InterPro" id="IPR046369">
    <property type="entry name" value="MAML1-3"/>
</dbReference>
<dbReference type="InterPro" id="IPR046370">
    <property type="entry name" value="MAML_N_sf"/>
</dbReference>
<dbReference type="InterPro" id="IPR019082">
    <property type="entry name" value="Mastermind-like_N"/>
</dbReference>
<dbReference type="PANTHER" id="PTHR15692">
    <property type="entry name" value="MASTERMIND-LIKE"/>
    <property type="match status" value="1"/>
</dbReference>
<dbReference type="PANTHER" id="PTHR15692:SF9">
    <property type="entry name" value="MASTERMIND-LIKE PROTEIN 2"/>
    <property type="match status" value="1"/>
</dbReference>
<dbReference type="Pfam" id="PF09596">
    <property type="entry name" value="MamL-1"/>
    <property type="match status" value="1"/>
</dbReference>
<dbReference type="SMART" id="SM01275">
    <property type="entry name" value="MamL-1"/>
    <property type="match status" value="1"/>
</dbReference>
<protein>
    <recommendedName>
        <fullName>Mastermind-like protein 2</fullName>
        <shortName>Mam-2</shortName>
    </recommendedName>
</protein>
<name>MAML2_BOVIN</name>
<reference key="1">
    <citation type="submission" date="2007-04" db="EMBL/GenBank/DDBJ databases">
        <authorList>
            <consortium name="NIH - Mammalian Gene Collection (MGC) project"/>
        </authorList>
    </citation>
    <scope>NUCLEOTIDE SEQUENCE [LARGE SCALE MRNA]</scope>
    <source>
        <strain>Hereford</strain>
        <tissue>Fetal muscle</tissue>
    </source>
</reference>
<keyword id="KW-0010">Activator</keyword>
<keyword id="KW-0914">Notch signaling pathway</keyword>
<keyword id="KW-0539">Nucleus</keyword>
<keyword id="KW-0597">Phosphoprotein</keyword>
<keyword id="KW-1185">Reference proteome</keyword>
<keyword id="KW-0804">Transcription</keyword>
<keyword id="KW-0805">Transcription regulation</keyword>
<accession>A5D7F6</accession>
<gene>
    <name type="primary">MAML2</name>
</gene>
<feature type="chain" id="PRO_0000317429" description="Mastermind-like protein 2">
    <location>
        <begin position="1"/>
        <end position="1128"/>
    </location>
</feature>
<feature type="region of interest" description="Disordered" evidence="3">
    <location>
        <begin position="1"/>
        <end position="22"/>
    </location>
</feature>
<feature type="region of interest" description="Disordered" evidence="3">
    <location>
        <begin position="81"/>
        <end position="167"/>
    </location>
</feature>
<feature type="region of interest" description="Disordered" evidence="3">
    <location>
        <begin position="343"/>
        <end position="509"/>
    </location>
</feature>
<feature type="region of interest" description="Disordered" evidence="3">
    <location>
        <begin position="521"/>
        <end position="649"/>
    </location>
</feature>
<feature type="region of interest" description="Disordered" evidence="3">
    <location>
        <begin position="677"/>
        <end position="714"/>
    </location>
</feature>
<feature type="region of interest" description="Disordered" evidence="3">
    <location>
        <begin position="758"/>
        <end position="794"/>
    </location>
</feature>
<feature type="region of interest" description="Disordered" evidence="3">
    <location>
        <begin position="1039"/>
        <end position="1073"/>
    </location>
</feature>
<feature type="compositionally biased region" description="Gly residues" evidence="3">
    <location>
        <begin position="12"/>
        <end position="22"/>
    </location>
</feature>
<feature type="compositionally biased region" description="Low complexity" evidence="3">
    <location>
        <begin position="113"/>
        <end position="122"/>
    </location>
</feature>
<feature type="compositionally biased region" description="Polar residues" evidence="3">
    <location>
        <begin position="347"/>
        <end position="357"/>
    </location>
</feature>
<feature type="compositionally biased region" description="Polar residues" evidence="3">
    <location>
        <begin position="374"/>
        <end position="387"/>
    </location>
</feature>
<feature type="compositionally biased region" description="Low complexity" evidence="3">
    <location>
        <begin position="395"/>
        <end position="426"/>
    </location>
</feature>
<feature type="compositionally biased region" description="Polar residues" evidence="3">
    <location>
        <begin position="431"/>
        <end position="446"/>
    </location>
</feature>
<feature type="compositionally biased region" description="Low complexity" evidence="3">
    <location>
        <begin position="453"/>
        <end position="473"/>
    </location>
</feature>
<feature type="compositionally biased region" description="Low complexity" evidence="3">
    <location>
        <begin position="484"/>
        <end position="497"/>
    </location>
</feature>
<feature type="compositionally biased region" description="Polar residues" evidence="3">
    <location>
        <begin position="566"/>
        <end position="584"/>
    </location>
</feature>
<feature type="compositionally biased region" description="Low complexity" evidence="3">
    <location>
        <begin position="590"/>
        <end position="649"/>
    </location>
</feature>
<feature type="compositionally biased region" description="Polar residues" evidence="3">
    <location>
        <begin position="677"/>
        <end position="695"/>
    </location>
</feature>
<feature type="compositionally biased region" description="Polar residues" evidence="3">
    <location>
        <begin position="778"/>
        <end position="794"/>
    </location>
</feature>
<feature type="compositionally biased region" description="Polar residues" evidence="3">
    <location>
        <begin position="1039"/>
        <end position="1052"/>
    </location>
</feature>
<feature type="modified residue" description="Phosphoserine" evidence="2">
    <location>
        <position position="177"/>
    </location>
</feature>